<dbReference type="EMBL" id="AF349314">
    <property type="protein sequence ID" value="AAK29434.1"/>
    <property type="molecule type" value="mRNA"/>
</dbReference>
<dbReference type="EMBL" id="AF164799">
    <property type="protein sequence ID" value="AAF80763.1"/>
    <property type="molecule type" value="mRNA"/>
</dbReference>
<dbReference type="EMBL" id="AC017083">
    <property type="protein sequence ID" value="AAY14714.1"/>
    <property type="molecule type" value="Genomic_DNA"/>
</dbReference>
<dbReference type="EMBL" id="CH471053">
    <property type="protein sequence ID" value="EAW99879.1"/>
    <property type="molecule type" value="Genomic_DNA"/>
</dbReference>
<dbReference type="EMBL" id="BC008304">
    <property type="protein sequence ID" value="AAH08304.1"/>
    <property type="molecule type" value="mRNA"/>
</dbReference>
<dbReference type="EMBL" id="BC018152">
    <property type="protein sequence ID" value="AAH18152.1"/>
    <property type="molecule type" value="mRNA"/>
</dbReference>
<dbReference type="EMBL" id="AK223118">
    <property type="protein sequence ID" value="BAD96838.1"/>
    <property type="molecule type" value="mRNA"/>
</dbReference>
<dbReference type="EMBL" id="AK291715">
    <property type="protein sequence ID" value="BAF84404.1"/>
    <property type="molecule type" value="mRNA"/>
</dbReference>
<dbReference type="CCDS" id="CCDS1885.1"/>
<dbReference type="RefSeq" id="NP_064528.1">
    <property type="nucleotide sequence ID" value="NM_020143.4"/>
</dbReference>
<dbReference type="PDB" id="6G18">
    <property type="method" value="EM"/>
    <property type="resolution" value="3.60 A"/>
    <property type="chains" value="x=1-252"/>
</dbReference>
<dbReference type="PDB" id="6G4S">
    <property type="method" value="EM"/>
    <property type="resolution" value="4.00 A"/>
    <property type="chains" value="x=1-252"/>
</dbReference>
<dbReference type="PDB" id="6G4W">
    <property type="method" value="EM"/>
    <property type="resolution" value="4.50 A"/>
    <property type="chains" value="x=1-252"/>
</dbReference>
<dbReference type="PDB" id="6G51">
    <property type="method" value="EM"/>
    <property type="resolution" value="4.10 A"/>
    <property type="chains" value="x=1-252"/>
</dbReference>
<dbReference type="PDB" id="6G53">
    <property type="method" value="EM"/>
    <property type="resolution" value="4.50 A"/>
    <property type="chains" value="x=1-252"/>
</dbReference>
<dbReference type="PDB" id="6G5I">
    <property type="method" value="EM"/>
    <property type="resolution" value="3.50 A"/>
    <property type="chains" value="x=1-252"/>
</dbReference>
<dbReference type="PDB" id="6ZUO">
    <property type="method" value="EM"/>
    <property type="resolution" value="3.10 A"/>
    <property type="chains" value="x=1-252"/>
</dbReference>
<dbReference type="PDB" id="6ZXD">
    <property type="method" value="EM"/>
    <property type="resolution" value="3.20 A"/>
    <property type="chains" value="x=1-252"/>
</dbReference>
<dbReference type="PDB" id="6ZXE">
    <property type="method" value="EM"/>
    <property type="resolution" value="3.00 A"/>
    <property type="chains" value="x=1-252"/>
</dbReference>
<dbReference type="PDB" id="7MQ8">
    <property type="method" value="EM"/>
    <property type="resolution" value="3.60 A"/>
    <property type="chains" value="SW=1-252"/>
</dbReference>
<dbReference type="PDB" id="7MQ9">
    <property type="method" value="EM"/>
    <property type="resolution" value="3.87 A"/>
    <property type="chains" value="SW=1-252"/>
</dbReference>
<dbReference type="PDB" id="7MQA">
    <property type="method" value="EM"/>
    <property type="resolution" value="2.70 A"/>
    <property type="chains" value="SW=1-252"/>
</dbReference>
<dbReference type="PDB" id="7WTS">
    <property type="method" value="EM"/>
    <property type="resolution" value="3.20 A"/>
    <property type="chains" value="x=1-252"/>
</dbReference>
<dbReference type="PDB" id="7WTT">
    <property type="method" value="EM"/>
    <property type="resolution" value="3.10 A"/>
    <property type="chains" value="x=1-252"/>
</dbReference>
<dbReference type="PDB" id="7WTU">
    <property type="method" value="EM"/>
    <property type="resolution" value="3.00 A"/>
    <property type="chains" value="x=1-252"/>
</dbReference>
<dbReference type="PDB" id="7WTV">
    <property type="method" value="EM"/>
    <property type="resolution" value="3.50 A"/>
    <property type="chains" value="x=1-252"/>
</dbReference>
<dbReference type="PDB" id="7WTW">
    <property type="method" value="EM"/>
    <property type="resolution" value="3.20 A"/>
    <property type="chains" value="x=1-252"/>
</dbReference>
<dbReference type="PDB" id="7WTX">
    <property type="method" value="EM"/>
    <property type="resolution" value="3.10 A"/>
    <property type="chains" value="x=1-252"/>
</dbReference>
<dbReference type="PDB" id="7WTZ">
    <property type="method" value="EM"/>
    <property type="resolution" value="3.00 A"/>
    <property type="chains" value="x=1-252"/>
</dbReference>
<dbReference type="PDB" id="7WU0">
    <property type="method" value="EM"/>
    <property type="resolution" value="3.30 A"/>
    <property type="chains" value="x=1-252"/>
</dbReference>
<dbReference type="PDB" id="8ZDC">
    <property type="method" value="EM"/>
    <property type="resolution" value="3.80 A"/>
    <property type="chains" value="x=1-252"/>
</dbReference>
<dbReference type="PDB" id="8ZDD">
    <property type="method" value="EM"/>
    <property type="resolution" value="3.70 A"/>
    <property type="chains" value="x=1-252"/>
</dbReference>
<dbReference type="PDBsum" id="6G18"/>
<dbReference type="PDBsum" id="6G4S"/>
<dbReference type="PDBsum" id="6G4W"/>
<dbReference type="PDBsum" id="6G51"/>
<dbReference type="PDBsum" id="6G53"/>
<dbReference type="PDBsum" id="6G5I"/>
<dbReference type="PDBsum" id="6ZUO"/>
<dbReference type="PDBsum" id="6ZXD"/>
<dbReference type="PDBsum" id="6ZXE"/>
<dbReference type="PDBsum" id="7MQ8"/>
<dbReference type="PDBsum" id="7MQ9"/>
<dbReference type="PDBsum" id="7MQA"/>
<dbReference type="PDBsum" id="7WTS"/>
<dbReference type="PDBsum" id="7WTT"/>
<dbReference type="PDBsum" id="7WTU"/>
<dbReference type="PDBsum" id="7WTV"/>
<dbReference type="PDBsum" id="7WTW"/>
<dbReference type="PDBsum" id="7WTX"/>
<dbReference type="PDBsum" id="7WTZ"/>
<dbReference type="PDBsum" id="7WU0"/>
<dbReference type="PDBsum" id="8ZDC"/>
<dbReference type="PDBsum" id="8ZDD"/>
<dbReference type="EMDB" id="EMD-11440"/>
<dbReference type="EMDB" id="EMD-11517"/>
<dbReference type="EMDB" id="EMD-11518"/>
<dbReference type="EMDB" id="EMD-23936"/>
<dbReference type="EMDB" id="EMD-23937"/>
<dbReference type="EMDB" id="EMD-23938"/>
<dbReference type="EMDB" id="EMD-32799"/>
<dbReference type="EMDB" id="EMD-32800"/>
<dbReference type="EMDB" id="EMD-32801"/>
<dbReference type="EMDB" id="EMD-32802"/>
<dbReference type="EMDB" id="EMD-32803"/>
<dbReference type="EMDB" id="EMD-32804"/>
<dbReference type="EMDB" id="EMD-32806"/>
<dbReference type="EMDB" id="EMD-32807"/>
<dbReference type="EMDB" id="EMD-39957"/>
<dbReference type="EMDB" id="EMD-39958"/>
<dbReference type="EMDB" id="EMD-4337"/>
<dbReference type="EMDB" id="EMD-4348"/>
<dbReference type="EMDB" id="EMD-4349"/>
<dbReference type="EMDB" id="EMD-4350"/>
<dbReference type="EMDB" id="EMD-4351"/>
<dbReference type="EMDB" id="EMD-4353"/>
<dbReference type="SMR" id="Q9NRX1"/>
<dbReference type="BioGRID" id="121232">
    <property type="interactions" value="146"/>
</dbReference>
<dbReference type="ComplexPortal" id="CPX-2511">
    <property type="entry name" value="Small ribosomal subunit processome"/>
</dbReference>
<dbReference type="FunCoup" id="Q9NRX1">
    <property type="interactions" value="2017"/>
</dbReference>
<dbReference type="IntAct" id="Q9NRX1">
    <property type="interactions" value="68"/>
</dbReference>
<dbReference type="MINT" id="Q9NRX1"/>
<dbReference type="STRING" id="9606.ENSP00000263657"/>
<dbReference type="GlyGen" id="Q9NRX1">
    <property type="glycosylation" value="2 sites, 1 O-linked glycan (2 sites)"/>
</dbReference>
<dbReference type="iPTMnet" id="Q9NRX1"/>
<dbReference type="PhosphoSitePlus" id="Q9NRX1"/>
<dbReference type="BioMuta" id="PNO1"/>
<dbReference type="DMDM" id="74734328"/>
<dbReference type="jPOST" id="Q9NRX1"/>
<dbReference type="MassIVE" id="Q9NRX1"/>
<dbReference type="PaxDb" id="9606-ENSP00000263657"/>
<dbReference type="PeptideAtlas" id="Q9NRX1"/>
<dbReference type="ProteomicsDB" id="82432"/>
<dbReference type="Pumba" id="Q9NRX1"/>
<dbReference type="Antibodypedia" id="30913">
    <property type="antibodies" value="86 antibodies from 18 providers"/>
</dbReference>
<dbReference type="DNASU" id="56902"/>
<dbReference type="Ensembl" id="ENST00000263657.7">
    <property type="protein sequence ID" value="ENSP00000263657.2"/>
    <property type="gene ID" value="ENSG00000115946.8"/>
</dbReference>
<dbReference type="GeneID" id="56902"/>
<dbReference type="KEGG" id="hsa:56902"/>
<dbReference type="MANE-Select" id="ENST00000263657.7">
    <property type="protein sequence ID" value="ENSP00000263657.2"/>
    <property type="RefSeq nucleotide sequence ID" value="NM_020143.4"/>
    <property type="RefSeq protein sequence ID" value="NP_064528.1"/>
</dbReference>
<dbReference type="UCSC" id="uc002seh.5">
    <property type="organism name" value="human"/>
</dbReference>
<dbReference type="AGR" id="HGNC:32790"/>
<dbReference type="CTD" id="56902"/>
<dbReference type="DisGeNET" id="56902"/>
<dbReference type="GeneCards" id="PNO1"/>
<dbReference type="HGNC" id="HGNC:32790">
    <property type="gene designation" value="PNO1"/>
</dbReference>
<dbReference type="HPA" id="ENSG00000115946">
    <property type="expression patterns" value="Low tissue specificity"/>
</dbReference>
<dbReference type="MIM" id="618710">
    <property type="type" value="gene"/>
</dbReference>
<dbReference type="neXtProt" id="NX_Q9NRX1"/>
<dbReference type="OpenTargets" id="ENSG00000115946"/>
<dbReference type="PharmGKB" id="PA162399854"/>
<dbReference type="VEuPathDB" id="HostDB:ENSG00000115946"/>
<dbReference type="eggNOG" id="KOG3273">
    <property type="taxonomic scope" value="Eukaryota"/>
</dbReference>
<dbReference type="GeneTree" id="ENSGT00390000018052"/>
<dbReference type="HOGENOM" id="CLU_064992_2_0_1"/>
<dbReference type="InParanoid" id="Q9NRX1"/>
<dbReference type="OMA" id="TPLRNNW"/>
<dbReference type="OrthoDB" id="1932641at2759"/>
<dbReference type="PAN-GO" id="Q9NRX1">
    <property type="GO annotations" value="1 GO annotation based on evolutionary models"/>
</dbReference>
<dbReference type="PhylomeDB" id="Q9NRX1"/>
<dbReference type="TreeFam" id="TF300114"/>
<dbReference type="PathwayCommons" id="Q9NRX1"/>
<dbReference type="Reactome" id="R-HSA-6790901">
    <property type="pathway name" value="rRNA modification in the nucleus and cytosol"/>
</dbReference>
<dbReference type="Reactome" id="R-HSA-6791226">
    <property type="pathway name" value="Major pathway of rRNA processing in the nucleolus and cytosol"/>
</dbReference>
<dbReference type="SignaLink" id="Q9NRX1"/>
<dbReference type="BioGRID-ORCS" id="56902">
    <property type="hits" value="548 hits in 1127 CRISPR screens"/>
</dbReference>
<dbReference type="CD-CODE" id="91857CE7">
    <property type="entry name" value="Nucleolus"/>
</dbReference>
<dbReference type="ChiTaRS" id="PNO1">
    <property type="organism name" value="human"/>
</dbReference>
<dbReference type="GeneWiki" id="PNO1"/>
<dbReference type="GenomeRNAi" id="56902"/>
<dbReference type="Pharos" id="Q9NRX1">
    <property type="development level" value="Tbio"/>
</dbReference>
<dbReference type="PRO" id="PR:Q9NRX1"/>
<dbReference type="Proteomes" id="UP000005640">
    <property type="component" value="Chromosome 2"/>
</dbReference>
<dbReference type="RNAct" id="Q9NRX1">
    <property type="molecule type" value="protein"/>
</dbReference>
<dbReference type="Bgee" id="ENSG00000115946">
    <property type="expression patterns" value="Expressed in buccal mucosa cell and 214 other cell types or tissues"/>
</dbReference>
<dbReference type="ExpressionAtlas" id="Q9NRX1">
    <property type="expression patterns" value="baseline and differential"/>
</dbReference>
<dbReference type="GO" id="GO:0005829">
    <property type="term" value="C:cytosol"/>
    <property type="evidence" value="ECO:0000304"/>
    <property type="project" value="Reactome"/>
</dbReference>
<dbReference type="GO" id="GO:0005730">
    <property type="term" value="C:nucleolus"/>
    <property type="evidence" value="ECO:0000314"/>
    <property type="project" value="UniProtKB"/>
</dbReference>
<dbReference type="GO" id="GO:0005654">
    <property type="term" value="C:nucleoplasm"/>
    <property type="evidence" value="ECO:0000314"/>
    <property type="project" value="HPA"/>
</dbReference>
<dbReference type="GO" id="GO:0005634">
    <property type="term" value="C:nucleus"/>
    <property type="evidence" value="ECO:0000318"/>
    <property type="project" value="GO_Central"/>
</dbReference>
<dbReference type="GO" id="GO:0032040">
    <property type="term" value="C:small-subunit processome"/>
    <property type="evidence" value="ECO:0000314"/>
    <property type="project" value="UniProtKB"/>
</dbReference>
<dbReference type="GO" id="GO:0003723">
    <property type="term" value="F:RNA binding"/>
    <property type="evidence" value="ECO:0007005"/>
    <property type="project" value="UniProtKB"/>
</dbReference>
<dbReference type="GO" id="GO:0042274">
    <property type="term" value="P:ribosomal small subunit biogenesis"/>
    <property type="evidence" value="ECO:0000314"/>
    <property type="project" value="UniProtKB"/>
</dbReference>
<dbReference type="CDD" id="cd22391">
    <property type="entry name" value="KH-I_PNO1_rpt1"/>
    <property type="match status" value="1"/>
</dbReference>
<dbReference type="CDD" id="cd22392">
    <property type="entry name" value="KH-I_PNO1_rpt2"/>
    <property type="match status" value="1"/>
</dbReference>
<dbReference type="FunFam" id="3.30.1370.10:FF:000009">
    <property type="entry name" value="RNA-binding protein PNO1"/>
    <property type="match status" value="1"/>
</dbReference>
<dbReference type="FunFam" id="3.30.1370.10:FF:000048">
    <property type="entry name" value="RNA-binding protein PNO1 isoform X2"/>
    <property type="match status" value="1"/>
</dbReference>
<dbReference type="Gene3D" id="3.30.1370.10">
    <property type="entry name" value="K Homology domain, type 1"/>
    <property type="match status" value="2"/>
</dbReference>
<dbReference type="InterPro" id="IPR055212">
    <property type="entry name" value="KH-I_PNO1_first"/>
</dbReference>
<dbReference type="InterPro" id="IPR004087">
    <property type="entry name" value="KH_dom"/>
</dbReference>
<dbReference type="InterPro" id="IPR036612">
    <property type="entry name" value="KH_dom_type_1_sf"/>
</dbReference>
<dbReference type="InterPro" id="IPR055211">
    <property type="entry name" value="KH_PNO1_2nd"/>
</dbReference>
<dbReference type="PANTHER" id="PTHR12826">
    <property type="entry name" value="RIBONUCLEASE Y"/>
    <property type="match status" value="1"/>
</dbReference>
<dbReference type="PANTHER" id="PTHR12826:SF13">
    <property type="entry name" value="RNA-BINDING PROTEIN PNO1"/>
    <property type="match status" value="1"/>
</dbReference>
<dbReference type="Pfam" id="PF22891">
    <property type="entry name" value="KH_PNO1_2nd"/>
    <property type="match status" value="1"/>
</dbReference>
<dbReference type="SMART" id="SM00322">
    <property type="entry name" value="KH"/>
    <property type="match status" value="1"/>
</dbReference>
<dbReference type="SUPFAM" id="SSF54791">
    <property type="entry name" value="Eukaryotic type KH-domain (KH-domain type I)"/>
    <property type="match status" value="1"/>
</dbReference>
<organism>
    <name type="scientific">Homo sapiens</name>
    <name type="common">Human</name>
    <dbReference type="NCBI Taxonomy" id="9606"/>
    <lineage>
        <taxon>Eukaryota</taxon>
        <taxon>Metazoa</taxon>
        <taxon>Chordata</taxon>
        <taxon>Craniata</taxon>
        <taxon>Vertebrata</taxon>
        <taxon>Euteleostomi</taxon>
        <taxon>Mammalia</taxon>
        <taxon>Eutheria</taxon>
        <taxon>Euarchontoglires</taxon>
        <taxon>Primates</taxon>
        <taxon>Haplorrhini</taxon>
        <taxon>Catarrhini</taxon>
        <taxon>Hominidae</taxon>
        <taxon>Homo</taxon>
    </lineage>
</organism>
<protein>
    <recommendedName>
        <fullName>RNA-binding protein PNO1</fullName>
    </recommendedName>
    <alternativeName>
        <fullName evidence="8">Partner of NOB1</fullName>
    </alternativeName>
</protein>
<gene>
    <name evidence="10" type="primary">PNO1</name>
</gene>
<name>PNO1_HUMAN</name>
<feature type="chain" id="PRO_0000270540" description="RNA-binding protein PNO1">
    <location>
        <begin position="1"/>
        <end position="252"/>
    </location>
</feature>
<feature type="domain" description="KH">
    <location>
        <begin position="173"/>
        <end position="225"/>
    </location>
</feature>
<feature type="region of interest" description="Disordered" evidence="1">
    <location>
        <begin position="1"/>
        <end position="71"/>
    </location>
</feature>
<feature type="compositionally biased region" description="Polar residues" evidence="1">
    <location>
        <begin position="1"/>
        <end position="10"/>
    </location>
</feature>
<feature type="compositionally biased region" description="Basic and acidic residues" evidence="1">
    <location>
        <begin position="43"/>
        <end position="54"/>
    </location>
</feature>
<feature type="modified residue" description="N-acetylmethionine" evidence="14">
    <location>
        <position position="1"/>
    </location>
</feature>
<feature type="sequence variant" id="VAR_029814" description="In dbSNP:rs2044693." evidence="2 6 7">
    <original>R</original>
    <variation>G</variation>
    <location>
        <position position="11"/>
    </location>
</feature>
<feature type="sequence variant" id="VAR_029815" description="In dbSNP:rs7590838.">
    <original>G</original>
    <variation>A</variation>
    <location>
        <position position="71"/>
    </location>
</feature>
<feature type="strand" evidence="15">
    <location>
        <begin position="75"/>
        <end position="79"/>
    </location>
</feature>
<feature type="helix" evidence="15">
    <location>
        <begin position="82"/>
        <end position="84"/>
    </location>
</feature>
<feature type="helix" evidence="15">
    <location>
        <begin position="86"/>
        <end position="90"/>
    </location>
</feature>
<feature type="helix" evidence="15">
    <location>
        <begin position="93"/>
        <end position="100"/>
    </location>
</feature>
<feature type="turn" evidence="15">
    <location>
        <begin position="101"/>
        <end position="103"/>
    </location>
</feature>
<feature type="strand" evidence="15">
    <location>
        <begin position="105"/>
        <end position="110"/>
    </location>
</feature>
<feature type="turn" evidence="15">
    <location>
        <begin position="111"/>
        <end position="114"/>
    </location>
</feature>
<feature type="strand" evidence="15">
    <location>
        <begin position="115"/>
        <end position="120"/>
    </location>
</feature>
<feature type="strand" evidence="15">
    <location>
        <begin position="126"/>
        <end position="129"/>
    </location>
</feature>
<feature type="helix" evidence="15">
    <location>
        <begin position="130"/>
        <end position="142"/>
    </location>
</feature>
<feature type="helix" evidence="15">
    <location>
        <begin position="146"/>
        <end position="149"/>
    </location>
</feature>
<feature type="helix" evidence="15">
    <location>
        <begin position="151"/>
        <end position="154"/>
    </location>
</feature>
<feature type="strand" evidence="15">
    <location>
        <begin position="159"/>
        <end position="164"/>
    </location>
</feature>
<feature type="helix" evidence="15">
    <location>
        <begin position="165"/>
        <end position="167"/>
    </location>
</feature>
<feature type="helix" evidence="15">
    <location>
        <begin position="174"/>
        <end position="184"/>
    </location>
</feature>
<feature type="helix" evidence="15">
    <location>
        <begin position="186"/>
        <end position="188"/>
    </location>
</feature>
<feature type="helix" evidence="15">
    <location>
        <begin position="189"/>
        <end position="198"/>
    </location>
</feature>
<feature type="strand" evidence="15">
    <location>
        <begin position="201"/>
        <end position="204"/>
    </location>
</feature>
<feature type="strand" evidence="15">
    <location>
        <begin position="206"/>
        <end position="213"/>
    </location>
</feature>
<feature type="helix" evidence="15">
    <location>
        <begin position="215"/>
        <end position="229"/>
    </location>
</feature>
<feature type="helix" evidence="15">
    <location>
        <begin position="234"/>
        <end position="246"/>
    </location>
</feature>
<evidence type="ECO:0000256" key="1">
    <source>
        <dbReference type="SAM" id="MobiDB-lite"/>
    </source>
</evidence>
<evidence type="ECO:0000269" key="2">
    <source>
    </source>
</evidence>
<evidence type="ECO:0000269" key="3">
    <source>
    </source>
</evidence>
<evidence type="ECO:0000269" key="4">
    <source>
    </source>
</evidence>
<evidence type="ECO:0000269" key="5">
    <source>
    </source>
</evidence>
<evidence type="ECO:0000269" key="6">
    <source ref="5"/>
</evidence>
<evidence type="ECO:0000269" key="7">
    <source ref="7"/>
</evidence>
<evidence type="ECO:0000303" key="8">
    <source>
    </source>
</evidence>
<evidence type="ECO:0000305" key="9"/>
<evidence type="ECO:0000312" key="10">
    <source>
        <dbReference type="HGNC" id="HGNC:32790"/>
    </source>
</evidence>
<evidence type="ECO:0007744" key="11">
    <source>
        <dbReference type="PDB" id="7MQ8"/>
    </source>
</evidence>
<evidence type="ECO:0007744" key="12">
    <source>
        <dbReference type="PDB" id="7MQ9"/>
    </source>
</evidence>
<evidence type="ECO:0007744" key="13">
    <source>
        <dbReference type="PDB" id="7MQA"/>
    </source>
</evidence>
<evidence type="ECO:0007744" key="14">
    <source>
    </source>
</evidence>
<evidence type="ECO:0007829" key="15">
    <source>
        <dbReference type="PDB" id="6ZXE"/>
    </source>
</evidence>
<proteinExistence type="evidence at protein level"/>
<keyword id="KW-0002">3D-structure</keyword>
<keyword id="KW-0007">Acetylation</keyword>
<keyword id="KW-0539">Nucleus</keyword>
<keyword id="KW-1267">Proteomics identification</keyword>
<keyword id="KW-1185">Reference proteome</keyword>
<keyword id="KW-0694">RNA-binding</keyword>
<accession>Q9NRX1</accession>
<accession>A8K6Q0</accession>
<accession>Q53G13</accession>
<accession>Q8WVB8</accession>
<comment type="function">
    <text evidence="4 5">Part of the small subunit (SSU) processome, first precursor of the small eukaryotic ribosomal subunit. During the assembly of the SSU processome in the nucleolus, many ribosome biogenesis factors, an RNA chaperone and ribosomal proteins associate with the nascent pre-rRNA and work in concert to generate RNA folding, modifications, rearrangements and cleavage as well as targeted degradation of pre-ribosomal RNA by the RNA exosome (PubMed:34516797). Positively regulates dimethylation of two adjacent adenosines in the loop of a conserved hairpin near the 3'-end of 18S rRNA (PubMed:25851604).</text>
</comment>
<comment type="subunit">
    <text evidence="5">Part of the small subunit (SSU) processome, composed of more than 70 proteins and the RNA chaperone small nucleolar RNA (snoRNA) U3.</text>
</comment>
<comment type="interaction">
    <interactant intactId="EBI-712787">
        <id>Q9NRX1</id>
    </interactant>
    <interactant intactId="EBI-1055254">
        <id>Q8WXH2</id>
        <label>JPH3</label>
    </interactant>
    <organismsDiffer>false</organismsDiffer>
    <experiments>3</experiments>
</comment>
<comment type="interaction">
    <interactant intactId="EBI-712787">
        <id>Q9NRX1</id>
    </interactant>
    <interactant intactId="EBI-373285">
        <id>Q9ULX3</id>
        <label>NOB1</label>
    </interactant>
    <organismsDiffer>false</organismsDiffer>
    <experiments>5</experiments>
</comment>
<comment type="interaction">
    <interactant intactId="EBI-712787">
        <id>Q9NRX1</id>
    </interactant>
    <interactant intactId="EBI-79165">
        <id>Q9NRD5</id>
        <label>PICK1</label>
    </interactant>
    <organismsDiffer>false</organismsDiffer>
    <experiments>3</experiments>
</comment>
<comment type="subcellular location">
    <subcellularLocation>
        <location evidence="3 5">Nucleus</location>
        <location evidence="3 5">Nucleolus</location>
    </subcellularLocation>
</comment>
<comment type="tissue specificity">
    <text evidence="3">Expressed in liver, lung, spleen and kidney. Weakly expressed in thymus, testis and ovary. Weakly or not expressed in heart, brain, skeletal muscle, placenta, pancreas, prostate, small intestine, colon and peripheral blood leukocytes.</text>
</comment>
<comment type="similarity">
    <text evidence="9">Belongs to the PNO1 family.</text>
</comment>
<reference key="1">
    <citation type="journal article" date="2004" name="DNA Seq.">
        <title>Cloning and characterization of a novel human RNA binding protein gene PNO1.</title>
        <authorList>
            <person name="Zhou G.-J."/>
            <person name="Zhang Y."/>
            <person name="Wang J."/>
            <person name="Guo J.H."/>
            <person name="Ni J."/>
            <person name="Zhong Z.-M."/>
            <person name="Wang L.-Q."/>
            <person name="Dang Y.-J."/>
            <person name="Dai J.F."/>
            <person name="Yu L."/>
        </authorList>
    </citation>
    <scope>NUCLEOTIDE SEQUENCE [MRNA]</scope>
    <scope>SUBCELLULAR LOCATION</scope>
    <scope>TISSUE SPECIFICITY</scope>
</reference>
<reference key="2">
    <citation type="journal article" date="2000" name="Proc. Natl. Acad. Sci. U.S.A.">
        <title>Gene expression profiling in the human hypothalamus-pituitary-adrenal axis and full-length cDNA cloning.</title>
        <authorList>
            <person name="Hu R.-M."/>
            <person name="Han Z.-G."/>
            <person name="Song H.-D."/>
            <person name="Peng Y.-D."/>
            <person name="Huang Q.-H."/>
            <person name="Ren S.-X."/>
            <person name="Gu Y.-J."/>
            <person name="Huang C.-H."/>
            <person name="Li Y.-B."/>
            <person name="Jiang C.-L."/>
            <person name="Fu G."/>
            <person name="Zhang Q.-H."/>
            <person name="Gu B.-W."/>
            <person name="Dai M."/>
            <person name="Mao Y.-F."/>
            <person name="Gao G.-F."/>
            <person name="Rong R."/>
            <person name="Ye M."/>
            <person name="Zhou J."/>
            <person name="Xu S.-H."/>
            <person name="Gu J."/>
            <person name="Shi J.-X."/>
            <person name="Jin W.-R."/>
            <person name="Zhang C.-K."/>
            <person name="Wu T.-M."/>
            <person name="Huang G.-Y."/>
            <person name="Chen Z."/>
            <person name="Chen M.-D."/>
            <person name="Chen J.-L."/>
        </authorList>
    </citation>
    <scope>NUCLEOTIDE SEQUENCE [LARGE SCALE MRNA]</scope>
    <source>
        <tissue>Adrenal gland</tissue>
    </source>
</reference>
<reference key="3">
    <citation type="journal article" date="2004" name="Nat. Genet.">
        <title>Complete sequencing and characterization of 21,243 full-length human cDNAs.</title>
        <authorList>
            <person name="Ota T."/>
            <person name="Suzuki Y."/>
            <person name="Nishikawa T."/>
            <person name="Otsuki T."/>
            <person name="Sugiyama T."/>
            <person name="Irie R."/>
            <person name="Wakamatsu A."/>
            <person name="Hayashi K."/>
            <person name="Sato H."/>
            <person name="Nagai K."/>
            <person name="Kimura K."/>
            <person name="Makita H."/>
            <person name="Sekine M."/>
            <person name="Obayashi M."/>
            <person name="Nishi T."/>
            <person name="Shibahara T."/>
            <person name="Tanaka T."/>
            <person name="Ishii S."/>
            <person name="Yamamoto J."/>
            <person name="Saito K."/>
            <person name="Kawai Y."/>
            <person name="Isono Y."/>
            <person name="Nakamura Y."/>
            <person name="Nagahari K."/>
            <person name="Murakami K."/>
            <person name="Yasuda T."/>
            <person name="Iwayanagi T."/>
            <person name="Wagatsuma M."/>
            <person name="Shiratori A."/>
            <person name="Sudo H."/>
            <person name="Hosoiri T."/>
            <person name="Kaku Y."/>
            <person name="Kodaira H."/>
            <person name="Kondo H."/>
            <person name="Sugawara M."/>
            <person name="Takahashi M."/>
            <person name="Kanda K."/>
            <person name="Yokoi T."/>
            <person name="Furuya T."/>
            <person name="Kikkawa E."/>
            <person name="Omura Y."/>
            <person name="Abe K."/>
            <person name="Kamihara K."/>
            <person name="Katsuta N."/>
            <person name="Sato K."/>
            <person name="Tanikawa M."/>
            <person name="Yamazaki M."/>
            <person name="Ninomiya K."/>
            <person name="Ishibashi T."/>
            <person name="Yamashita H."/>
            <person name="Murakawa K."/>
            <person name="Fujimori K."/>
            <person name="Tanai H."/>
            <person name="Kimata M."/>
            <person name="Watanabe M."/>
            <person name="Hiraoka S."/>
            <person name="Chiba Y."/>
            <person name="Ishida S."/>
            <person name="Ono Y."/>
            <person name="Takiguchi S."/>
            <person name="Watanabe S."/>
            <person name="Yosida M."/>
            <person name="Hotuta T."/>
            <person name="Kusano J."/>
            <person name="Kanehori K."/>
            <person name="Takahashi-Fujii A."/>
            <person name="Hara H."/>
            <person name="Tanase T.-O."/>
            <person name="Nomura Y."/>
            <person name="Togiya S."/>
            <person name="Komai F."/>
            <person name="Hara R."/>
            <person name="Takeuchi K."/>
            <person name="Arita M."/>
            <person name="Imose N."/>
            <person name="Musashino K."/>
            <person name="Yuuki H."/>
            <person name="Oshima A."/>
            <person name="Sasaki N."/>
            <person name="Aotsuka S."/>
            <person name="Yoshikawa Y."/>
            <person name="Matsunawa H."/>
            <person name="Ichihara T."/>
            <person name="Shiohata N."/>
            <person name="Sano S."/>
            <person name="Moriya S."/>
            <person name="Momiyama H."/>
            <person name="Satoh N."/>
            <person name="Takami S."/>
            <person name="Terashima Y."/>
            <person name="Suzuki O."/>
            <person name="Nakagawa S."/>
            <person name="Senoh A."/>
            <person name="Mizoguchi H."/>
            <person name="Goto Y."/>
            <person name="Shimizu F."/>
            <person name="Wakebe H."/>
            <person name="Hishigaki H."/>
            <person name="Watanabe T."/>
            <person name="Sugiyama A."/>
            <person name="Takemoto M."/>
            <person name="Kawakami B."/>
            <person name="Yamazaki M."/>
            <person name="Watanabe K."/>
            <person name="Kumagai A."/>
            <person name="Itakura S."/>
            <person name="Fukuzumi Y."/>
            <person name="Fujimori Y."/>
            <person name="Komiyama M."/>
            <person name="Tashiro H."/>
            <person name="Tanigami A."/>
            <person name="Fujiwara T."/>
            <person name="Ono T."/>
            <person name="Yamada K."/>
            <person name="Fujii Y."/>
            <person name="Ozaki K."/>
            <person name="Hirao M."/>
            <person name="Ohmori Y."/>
            <person name="Kawabata A."/>
            <person name="Hikiji T."/>
            <person name="Kobatake N."/>
            <person name="Inagaki H."/>
            <person name="Ikema Y."/>
            <person name="Okamoto S."/>
            <person name="Okitani R."/>
            <person name="Kawakami T."/>
            <person name="Noguchi S."/>
            <person name="Itoh T."/>
            <person name="Shigeta K."/>
            <person name="Senba T."/>
            <person name="Matsumura K."/>
            <person name="Nakajima Y."/>
            <person name="Mizuno T."/>
            <person name="Morinaga M."/>
            <person name="Sasaki M."/>
            <person name="Togashi T."/>
            <person name="Oyama M."/>
            <person name="Hata H."/>
            <person name="Watanabe M."/>
            <person name="Komatsu T."/>
            <person name="Mizushima-Sugano J."/>
            <person name="Satoh T."/>
            <person name="Shirai Y."/>
            <person name="Takahashi Y."/>
            <person name="Nakagawa K."/>
            <person name="Okumura K."/>
            <person name="Nagase T."/>
            <person name="Nomura N."/>
            <person name="Kikuchi H."/>
            <person name="Masuho Y."/>
            <person name="Yamashita R."/>
            <person name="Nakai K."/>
            <person name="Yada T."/>
            <person name="Nakamura Y."/>
            <person name="Ohara O."/>
            <person name="Isogai T."/>
            <person name="Sugano S."/>
        </authorList>
    </citation>
    <scope>NUCLEOTIDE SEQUENCE [LARGE SCALE MRNA]</scope>
    <scope>VARIANT GLY-11</scope>
    <source>
        <tissue>Placenta</tissue>
    </source>
</reference>
<reference key="4">
    <citation type="journal article" date="2005" name="Nature">
        <title>Generation and annotation of the DNA sequences of human chromosomes 2 and 4.</title>
        <authorList>
            <person name="Hillier L.W."/>
            <person name="Graves T.A."/>
            <person name="Fulton R.S."/>
            <person name="Fulton L.A."/>
            <person name="Pepin K.H."/>
            <person name="Minx P."/>
            <person name="Wagner-McPherson C."/>
            <person name="Layman D."/>
            <person name="Wylie K."/>
            <person name="Sekhon M."/>
            <person name="Becker M.C."/>
            <person name="Fewell G.A."/>
            <person name="Delehaunty K.D."/>
            <person name="Miner T.L."/>
            <person name="Nash W.E."/>
            <person name="Kremitzki C."/>
            <person name="Oddy L."/>
            <person name="Du H."/>
            <person name="Sun H."/>
            <person name="Bradshaw-Cordum H."/>
            <person name="Ali J."/>
            <person name="Carter J."/>
            <person name="Cordes M."/>
            <person name="Harris A."/>
            <person name="Isak A."/>
            <person name="van Brunt A."/>
            <person name="Nguyen C."/>
            <person name="Du F."/>
            <person name="Courtney L."/>
            <person name="Kalicki J."/>
            <person name="Ozersky P."/>
            <person name="Abbott S."/>
            <person name="Armstrong J."/>
            <person name="Belter E.A."/>
            <person name="Caruso L."/>
            <person name="Cedroni M."/>
            <person name="Cotton M."/>
            <person name="Davidson T."/>
            <person name="Desai A."/>
            <person name="Elliott G."/>
            <person name="Erb T."/>
            <person name="Fronick C."/>
            <person name="Gaige T."/>
            <person name="Haakenson W."/>
            <person name="Haglund K."/>
            <person name="Holmes A."/>
            <person name="Harkins R."/>
            <person name="Kim K."/>
            <person name="Kruchowski S.S."/>
            <person name="Strong C.M."/>
            <person name="Grewal N."/>
            <person name="Goyea E."/>
            <person name="Hou S."/>
            <person name="Levy A."/>
            <person name="Martinka S."/>
            <person name="Mead K."/>
            <person name="McLellan M.D."/>
            <person name="Meyer R."/>
            <person name="Randall-Maher J."/>
            <person name="Tomlinson C."/>
            <person name="Dauphin-Kohlberg S."/>
            <person name="Kozlowicz-Reilly A."/>
            <person name="Shah N."/>
            <person name="Swearengen-Shahid S."/>
            <person name="Snider J."/>
            <person name="Strong J.T."/>
            <person name="Thompson J."/>
            <person name="Yoakum M."/>
            <person name="Leonard S."/>
            <person name="Pearman C."/>
            <person name="Trani L."/>
            <person name="Radionenko M."/>
            <person name="Waligorski J.E."/>
            <person name="Wang C."/>
            <person name="Rock S.M."/>
            <person name="Tin-Wollam A.-M."/>
            <person name="Maupin R."/>
            <person name="Latreille P."/>
            <person name="Wendl M.C."/>
            <person name="Yang S.-P."/>
            <person name="Pohl C."/>
            <person name="Wallis J.W."/>
            <person name="Spieth J."/>
            <person name="Bieri T.A."/>
            <person name="Berkowicz N."/>
            <person name="Nelson J.O."/>
            <person name="Osborne J."/>
            <person name="Ding L."/>
            <person name="Meyer R."/>
            <person name="Sabo A."/>
            <person name="Shotland Y."/>
            <person name="Sinha P."/>
            <person name="Wohldmann P.E."/>
            <person name="Cook L.L."/>
            <person name="Hickenbotham M.T."/>
            <person name="Eldred J."/>
            <person name="Williams D."/>
            <person name="Jones T.A."/>
            <person name="She X."/>
            <person name="Ciccarelli F.D."/>
            <person name="Izaurralde E."/>
            <person name="Taylor J."/>
            <person name="Schmutz J."/>
            <person name="Myers R.M."/>
            <person name="Cox D.R."/>
            <person name="Huang X."/>
            <person name="McPherson J.D."/>
            <person name="Mardis E.R."/>
            <person name="Clifton S.W."/>
            <person name="Warren W.C."/>
            <person name="Chinwalla A.T."/>
            <person name="Eddy S.R."/>
            <person name="Marra M.A."/>
            <person name="Ovcharenko I."/>
            <person name="Furey T.S."/>
            <person name="Miller W."/>
            <person name="Eichler E.E."/>
            <person name="Bork P."/>
            <person name="Suyama M."/>
            <person name="Torrents D."/>
            <person name="Waterston R.H."/>
            <person name="Wilson R.K."/>
        </authorList>
    </citation>
    <scope>NUCLEOTIDE SEQUENCE [LARGE SCALE GENOMIC DNA]</scope>
</reference>
<reference key="5">
    <citation type="submission" date="2005-09" db="EMBL/GenBank/DDBJ databases">
        <authorList>
            <person name="Mural R.J."/>
            <person name="Istrail S."/>
            <person name="Sutton G.G."/>
            <person name="Florea L."/>
            <person name="Halpern A.L."/>
            <person name="Mobarry C.M."/>
            <person name="Lippert R."/>
            <person name="Walenz B."/>
            <person name="Shatkay H."/>
            <person name="Dew I."/>
            <person name="Miller J.R."/>
            <person name="Flanigan M.J."/>
            <person name="Edwards N.J."/>
            <person name="Bolanos R."/>
            <person name="Fasulo D."/>
            <person name="Halldorsson B.V."/>
            <person name="Hannenhalli S."/>
            <person name="Turner R."/>
            <person name="Yooseph S."/>
            <person name="Lu F."/>
            <person name="Nusskern D.R."/>
            <person name="Shue B.C."/>
            <person name="Zheng X.H."/>
            <person name="Zhong F."/>
            <person name="Delcher A.L."/>
            <person name="Huson D.H."/>
            <person name="Kravitz S.A."/>
            <person name="Mouchard L."/>
            <person name="Reinert K."/>
            <person name="Remington K.A."/>
            <person name="Clark A.G."/>
            <person name="Waterman M.S."/>
            <person name="Eichler E.E."/>
            <person name="Adams M.D."/>
            <person name="Hunkapiller M.W."/>
            <person name="Myers E.W."/>
            <person name="Venter J.C."/>
        </authorList>
    </citation>
    <scope>NUCLEOTIDE SEQUENCE [LARGE SCALE GENOMIC DNA]</scope>
    <scope>VARIANT GLY-11</scope>
</reference>
<reference key="6">
    <citation type="journal article" date="2004" name="Genome Res.">
        <title>The status, quality, and expansion of the NIH full-length cDNA project: the Mammalian Gene Collection (MGC).</title>
        <authorList>
            <consortium name="The MGC Project Team"/>
        </authorList>
    </citation>
    <scope>NUCLEOTIDE SEQUENCE [LARGE SCALE MRNA]</scope>
    <source>
        <tissue>Eye</tissue>
        <tissue>Lung</tissue>
    </source>
</reference>
<reference key="7">
    <citation type="submission" date="2005-04" db="EMBL/GenBank/DDBJ databases">
        <authorList>
            <person name="Suzuki Y."/>
            <person name="Sugano S."/>
            <person name="Totoki Y."/>
            <person name="Toyoda A."/>
            <person name="Takeda T."/>
            <person name="Sakaki Y."/>
            <person name="Tanaka A."/>
            <person name="Yokoyama S."/>
        </authorList>
    </citation>
    <scope>NUCLEOTIDE SEQUENCE [LARGE SCALE MRNA] OF 5-252</scope>
    <scope>VARIANT GLY-11</scope>
</reference>
<reference key="8">
    <citation type="journal article" date="2009" name="Anal. Chem.">
        <title>Lys-N and trypsin cover complementary parts of the phosphoproteome in a refined SCX-based approach.</title>
        <authorList>
            <person name="Gauci S."/>
            <person name="Helbig A.O."/>
            <person name="Slijper M."/>
            <person name="Krijgsveld J."/>
            <person name="Heck A.J."/>
            <person name="Mohammed S."/>
        </authorList>
    </citation>
    <scope>ACETYLATION [LARGE SCALE ANALYSIS] AT MET-1</scope>
    <scope>IDENTIFICATION BY MASS SPECTROMETRY [LARGE SCALE ANALYSIS]</scope>
</reference>
<reference key="9">
    <citation type="journal article" date="2011" name="BMC Syst. Biol.">
        <title>Initial characterization of the human central proteome.</title>
        <authorList>
            <person name="Burkard T.R."/>
            <person name="Planyavsky M."/>
            <person name="Kaupe I."/>
            <person name="Breitwieser F.P."/>
            <person name="Buerckstuemmer T."/>
            <person name="Bennett K.L."/>
            <person name="Superti-Furga G."/>
            <person name="Colinge J."/>
        </authorList>
    </citation>
    <scope>IDENTIFICATION BY MASS SPECTROMETRY [LARGE SCALE ANALYSIS]</scope>
</reference>
<reference key="10">
    <citation type="journal article" date="2015" name="Mol. Biol. Cell">
        <title>The human 18S rRNA base methyltransferases DIMT1L and WBSCR22-TRMT112 but not rRNA modification are required for ribosome biogenesis.</title>
        <authorList>
            <person name="Zorbas C."/>
            <person name="Nicolas E."/>
            <person name="Wacheul L."/>
            <person name="Huvelle E."/>
            <person name="Heurgue-Hamard V."/>
            <person name="Lafontaine D.L."/>
        </authorList>
    </citation>
    <scope>FUNCTION</scope>
</reference>
<reference evidence="11 12 13" key="11">
    <citation type="journal article" date="2021" name="Science">
        <title>Nucleolar maturation of the human small subunit processome.</title>
        <authorList>
            <person name="Singh S."/>
            <person name="Vanden Broeck A."/>
            <person name="Miller L."/>
            <person name="Chaker-Margot M."/>
            <person name="Klinge S."/>
        </authorList>
    </citation>
    <scope>STRUCTURE BY ELECTRON MICROSCOPY (2.70 ANGSTROMS)</scope>
    <scope>FUNCTION</scope>
    <scope>SUBUNIT</scope>
    <scope>SUBCELLULAR LOCATION</scope>
</reference>
<sequence>MESEMETQSARAEEGFTQVTRKGGRRAKKRQAEQLSAAGEGGDAGRMDTEEARPAKRPVFPPLCGDGLLSGKEETRKIPVPANRYTPLKENWMKIFTPIVEHLGLQIRFNLKSRNVEIRTCKETKDVSALTKAADFVKAFILGFQVEDALALIRLDDLFLESFEITDVKPLKGDHLSRAIGRIAGKGGKTKFTIENVTRTRIVLADVKVHILGSFQNIKMARTAICNLILGNPPSKVYGNIRAVASRSADRF</sequence>